<dbReference type="EC" id="3.4.11.-"/>
<dbReference type="EMBL" id="CM002239">
    <property type="protein sequence ID" value="EAA27812.1"/>
    <property type="molecule type" value="Genomic_DNA"/>
</dbReference>
<dbReference type="RefSeq" id="XP_957048.1">
    <property type="nucleotide sequence ID" value="XM_951955.2"/>
</dbReference>
<dbReference type="SMR" id="Q7RYC8"/>
<dbReference type="FunCoup" id="Q7RYC8">
    <property type="interactions" value="24"/>
</dbReference>
<dbReference type="STRING" id="367110.Q7RYC8"/>
<dbReference type="MEROPS" id="M28.022"/>
<dbReference type="GlyCosmos" id="Q7RYC8">
    <property type="glycosylation" value="3 sites, No reported glycans"/>
</dbReference>
<dbReference type="PaxDb" id="5141-EFNCRP00000005241"/>
<dbReference type="EnsemblFungi" id="EAA27812">
    <property type="protein sequence ID" value="EAA27812"/>
    <property type="gene ID" value="NCU04479"/>
</dbReference>
<dbReference type="GeneID" id="3873191"/>
<dbReference type="KEGG" id="ncr:NCU04479"/>
<dbReference type="VEuPathDB" id="FungiDB:NCU04479"/>
<dbReference type="HOGENOM" id="CLU_025866_0_0_1"/>
<dbReference type="InParanoid" id="Q7RYC8"/>
<dbReference type="OMA" id="GMLQQDM"/>
<dbReference type="OrthoDB" id="2214at2759"/>
<dbReference type="Proteomes" id="UP000001805">
    <property type="component" value="Chromosome 4, Linkage Group IV"/>
</dbReference>
<dbReference type="GO" id="GO:0005576">
    <property type="term" value="C:extracellular region"/>
    <property type="evidence" value="ECO:0007669"/>
    <property type="project" value="UniProtKB-SubCell"/>
</dbReference>
<dbReference type="GO" id="GO:0004177">
    <property type="term" value="F:aminopeptidase activity"/>
    <property type="evidence" value="ECO:0007669"/>
    <property type="project" value="UniProtKB-KW"/>
</dbReference>
<dbReference type="GO" id="GO:0046872">
    <property type="term" value="F:metal ion binding"/>
    <property type="evidence" value="ECO:0007669"/>
    <property type="project" value="UniProtKB-KW"/>
</dbReference>
<dbReference type="GO" id="GO:0008235">
    <property type="term" value="F:metalloexopeptidase activity"/>
    <property type="evidence" value="ECO:0007669"/>
    <property type="project" value="InterPro"/>
</dbReference>
<dbReference type="GO" id="GO:0006508">
    <property type="term" value="P:proteolysis"/>
    <property type="evidence" value="ECO:0000318"/>
    <property type="project" value="GO_Central"/>
</dbReference>
<dbReference type="CDD" id="cd03879">
    <property type="entry name" value="M28_AAP"/>
    <property type="match status" value="1"/>
</dbReference>
<dbReference type="FunFam" id="3.40.630.10:FF:000042">
    <property type="entry name" value="Peptide hydrolase"/>
    <property type="match status" value="1"/>
</dbReference>
<dbReference type="Gene3D" id="3.40.630.10">
    <property type="entry name" value="Zn peptidases"/>
    <property type="match status" value="1"/>
</dbReference>
<dbReference type="InterPro" id="IPR045175">
    <property type="entry name" value="M28_fam"/>
</dbReference>
<dbReference type="InterPro" id="IPR007484">
    <property type="entry name" value="Peptidase_M28"/>
</dbReference>
<dbReference type="PANTHER" id="PTHR12147:SF56">
    <property type="entry name" value="AMINOPEPTIDASE YDR415C-RELATED"/>
    <property type="match status" value="1"/>
</dbReference>
<dbReference type="PANTHER" id="PTHR12147">
    <property type="entry name" value="METALLOPEPTIDASE M28 FAMILY MEMBER"/>
    <property type="match status" value="1"/>
</dbReference>
<dbReference type="Pfam" id="PF04389">
    <property type="entry name" value="Peptidase_M28"/>
    <property type="match status" value="1"/>
</dbReference>
<dbReference type="SUPFAM" id="SSF53187">
    <property type="entry name" value="Zn-dependent exopeptidases"/>
    <property type="match status" value="1"/>
</dbReference>
<gene>
    <name type="primary">lap1</name>
    <name type="ORF">NCU04479</name>
</gene>
<protein>
    <recommendedName>
        <fullName>Leucine aminopeptidase 1</fullName>
        <ecNumber>3.4.11.-</ecNumber>
    </recommendedName>
    <alternativeName>
        <fullName>Leucyl aminopeptidase 1</fullName>
        <shortName>LAP1</shortName>
    </alternativeName>
</protein>
<evidence type="ECO:0000250" key="1"/>
<evidence type="ECO:0000255" key="2"/>
<evidence type="ECO:0000305" key="3"/>
<sequence length="402" mass="45198">MKISNASLLALLLPAASARFVEQAEQNRVMLFPDGIPEEPKSTTKYHIELSPGDTRWVTEDEKWELRRNGQRFFDITDHAELGTFNKRPYKKSVFPKKPTQKKDLEPLLKNLSKTEMEDHLTTFTSFHTRYYKSESGRQSSEWLLKQVRDTIKAAGADDTVTARHFEHAWGQNSIIATIPGKTNATVVIGAHQDSINLWLPSVLAAPGADDDGSGTVTILEAFRVLLQSEDIIKGNHENTIEFHWYSAEEGGLLGSQAIFTTYEKARRDVKAMLQQDMTGFVSRTLQAGEVESVGVIVDYVDPNLTDFIKKIIVEYCDIPYVETKCGYACSDHASASKAGYPSAFVIESAFEYSDNHIHTTDDLIKYLSFDHMLQHARMTLAFAYELAFADFAKLEKGHGDL</sequence>
<accession>Q7RYC8</accession>
<name>LAP1_NEUCR</name>
<comment type="function">
    <text evidence="1">Extracellular aminopeptidase that allows assimilation of proteinaceous substrates.</text>
</comment>
<comment type="cofactor">
    <cofactor evidence="1">
        <name>Zn(2+)</name>
        <dbReference type="ChEBI" id="CHEBI:29105"/>
    </cofactor>
    <text evidence="1">Binds 2 Zn(2+) ions per subunit.</text>
</comment>
<comment type="subunit">
    <text evidence="1">Monomer.</text>
</comment>
<comment type="subcellular location">
    <subcellularLocation>
        <location evidence="1">Secreted</location>
    </subcellularLocation>
</comment>
<comment type="similarity">
    <text evidence="3">Belongs to the peptidase M28 family. M28E subfamily.</text>
</comment>
<organism>
    <name type="scientific">Neurospora crassa (strain ATCC 24698 / 74-OR23-1A / CBS 708.71 / DSM 1257 / FGSC 987)</name>
    <dbReference type="NCBI Taxonomy" id="367110"/>
    <lineage>
        <taxon>Eukaryota</taxon>
        <taxon>Fungi</taxon>
        <taxon>Dikarya</taxon>
        <taxon>Ascomycota</taxon>
        <taxon>Pezizomycotina</taxon>
        <taxon>Sordariomycetes</taxon>
        <taxon>Sordariomycetidae</taxon>
        <taxon>Sordariales</taxon>
        <taxon>Sordariaceae</taxon>
        <taxon>Neurospora</taxon>
    </lineage>
</organism>
<keyword id="KW-0031">Aminopeptidase</keyword>
<keyword id="KW-1015">Disulfide bond</keyword>
<keyword id="KW-0325">Glycoprotein</keyword>
<keyword id="KW-0378">Hydrolase</keyword>
<keyword id="KW-0479">Metal-binding</keyword>
<keyword id="KW-0645">Protease</keyword>
<keyword id="KW-1185">Reference proteome</keyword>
<keyword id="KW-0964">Secreted</keyword>
<keyword id="KW-0732">Signal</keyword>
<keyword id="KW-0862">Zinc</keyword>
<keyword id="KW-0865">Zymogen</keyword>
<feature type="signal peptide" evidence="2">
    <location>
        <begin position="1"/>
        <end position="18"/>
    </location>
</feature>
<feature type="propeptide" id="PRO_0000412429" evidence="1">
    <location>
        <begin position="19"/>
        <end position="92"/>
    </location>
</feature>
<feature type="chain" id="PRO_0000412430" description="Leucine aminopeptidase 1">
    <location>
        <begin position="93"/>
        <end position="402"/>
    </location>
</feature>
<feature type="binding site" evidence="1">
    <location>
        <position position="192"/>
    </location>
    <ligand>
        <name>Zn(2+)</name>
        <dbReference type="ChEBI" id="CHEBI:29105"/>
        <label>1</label>
    </ligand>
</feature>
<feature type="binding site" evidence="1">
    <location>
        <position position="211"/>
    </location>
    <ligand>
        <name>Zn(2+)</name>
        <dbReference type="ChEBI" id="CHEBI:29105"/>
        <label>1</label>
    </ligand>
</feature>
<feature type="binding site" evidence="1">
    <location>
        <position position="211"/>
    </location>
    <ligand>
        <name>Zn(2+)</name>
        <dbReference type="ChEBI" id="CHEBI:29105"/>
        <label>2</label>
        <note>catalytic</note>
    </ligand>
</feature>
<feature type="binding site" evidence="1">
    <location>
        <position position="250"/>
    </location>
    <ligand>
        <name>Zn(2+)</name>
        <dbReference type="ChEBI" id="CHEBI:29105"/>
        <label>2</label>
        <note>catalytic</note>
    </ligand>
</feature>
<feature type="binding site" evidence="1">
    <location>
        <position position="277"/>
    </location>
    <ligand>
        <name>Zn(2+)</name>
        <dbReference type="ChEBI" id="CHEBI:29105"/>
        <label>1</label>
    </ligand>
</feature>
<feature type="binding site" evidence="1">
    <location>
        <position position="359"/>
    </location>
    <ligand>
        <name>Zn(2+)</name>
        <dbReference type="ChEBI" id="CHEBI:29105"/>
        <label>2</label>
        <note>catalytic</note>
    </ligand>
</feature>
<feature type="glycosylation site" description="N-linked (GlcNAc...) asparagine" evidence="2">
    <location>
        <position position="111"/>
    </location>
</feature>
<feature type="glycosylation site" description="N-linked (GlcNAc...) asparagine" evidence="2">
    <location>
        <position position="184"/>
    </location>
</feature>
<feature type="glycosylation site" description="N-linked (GlcNAc...) asparagine" evidence="2">
    <location>
        <position position="304"/>
    </location>
</feature>
<feature type="disulfide bond" evidence="1">
    <location>
        <begin position="326"/>
        <end position="330"/>
    </location>
</feature>
<proteinExistence type="inferred from homology"/>
<reference key="1">
    <citation type="journal article" date="2003" name="Nature">
        <title>The genome sequence of the filamentous fungus Neurospora crassa.</title>
        <authorList>
            <person name="Galagan J.E."/>
            <person name="Calvo S.E."/>
            <person name="Borkovich K.A."/>
            <person name="Selker E.U."/>
            <person name="Read N.D."/>
            <person name="Jaffe D.B."/>
            <person name="FitzHugh W."/>
            <person name="Ma L.-J."/>
            <person name="Smirnov S."/>
            <person name="Purcell S."/>
            <person name="Rehman B."/>
            <person name="Elkins T."/>
            <person name="Engels R."/>
            <person name="Wang S."/>
            <person name="Nielsen C.B."/>
            <person name="Butler J."/>
            <person name="Endrizzi M."/>
            <person name="Qui D."/>
            <person name="Ianakiev P."/>
            <person name="Bell-Pedersen D."/>
            <person name="Nelson M.A."/>
            <person name="Werner-Washburne M."/>
            <person name="Selitrennikoff C.P."/>
            <person name="Kinsey J.A."/>
            <person name="Braun E.L."/>
            <person name="Zelter A."/>
            <person name="Schulte U."/>
            <person name="Kothe G.O."/>
            <person name="Jedd G."/>
            <person name="Mewes H.-W."/>
            <person name="Staben C."/>
            <person name="Marcotte E."/>
            <person name="Greenberg D."/>
            <person name="Roy A."/>
            <person name="Foley K."/>
            <person name="Naylor J."/>
            <person name="Stange-Thomann N."/>
            <person name="Barrett R."/>
            <person name="Gnerre S."/>
            <person name="Kamal M."/>
            <person name="Kamvysselis M."/>
            <person name="Mauceli E.W."/>
            <person name="Bielke C."/>
            <person name="Rudd S."/>
            <person name="Frishman D."/>
            <person name="Krystofova S."/>
            <person name="Rasmussen C."/>
            <person name="Metzenberg R.L."/>
            <person name="Perkins D.D."/>
            <person name="Kroken S."/>
            <person name="Cogoni C."/>
            <person name="Macino G."/>
            <person name="Catcheside D.E.A."/>
            <person name="Li W."/>
            <person name="Pratt R.J."/>
            <person name="Osmani S.A."/>
            <person name="DeSouza C.P.C."/>
            <person name="Glass N.L."/>
            <person name="Orbach M.J."/>
            <person name="Berglund J.A."/>
            <person name="Voelker R."/>
            <person name="Yarden O."/>
            <person name="Plamann M."/>
            <person name="Seiler S."/>
            <person name="Dunlap J.C."/>
            <person name="Radford A."/>
            <person name="Aramayo R."/>
            <person name="Natvig D.O."/>
            <person name="Alex L.A."/>
            <person name="Mannhaupt G."/>
            <person name="Ebbole D.J."/>
            <person name="Freitag M."/>
            <person name="Paulsen I."/>
            <person name="Sachs M.S."/>
            <person name="Lander E.S."/>
            <person name="Nusbaum C."/>
            <person name="Birren B.W."/>
        </authorList>
    </citation>
    <scope>NUCLEOTIDE SEQUENCE [LARGE SCALE GENOMIC DNA]</scope>
    <source>
        <strain>ATCC 24698 / 74-OR23-1A / CBS 708.71 / DSM 1257 / FGSC 987</strain>
    </source>
</reference>